<comment type="function">
    <text evidence="1 3 4 8">Regulates Wnt proteins sorting and secretion in a feedback regulatory mechanism. This reciprocal interaction plays a key role in the regulation of expression, subcellular location, binding and organelle-specific association of Wnt proteins (PubMed:34587386). Plays also an important role in establishment of the anterior-posterior body axis formation during development (By similarity).</text>
</comment>
<comment type="subunit">
    <text evidence="1">Interacts with WNT3A. Interacts with WNT1, WNT3 and WNT5A (By similarity).</text>
</comment>
<comment type="interaction">
    <interactant intactId="EBI-2868748">
        <id>Q5T9L3</id>
    </interactant>
    <interactant intactId="EBI-2624570">
        <id>P35372</id>
        <label>OPRM1</label>
    </interactant>
    <organismsDiffer>false</organismsDiffer>
    <experiments>11</experiments>
</comment>
<comment type="interaction">
    <interactant intactId="EBI-2868748">
        <id>Q5T9L3</id>
    </interactant>
    <interactant intactId="EBI-6661445">
        <id>Q01959</id>
        <label>SLC6A3</label>
    </interactant>
    <organismsDiffer>false</organismsDiffer>
    <experiments>2</experiments>
</comment>
<comment type="interaction">
    <interactant intactId="EBI-2868748">
        <id>Q5T9L3</id>
    </interactant>
    <interactant intactId="EBI-6173037">
        <id>P56704</id>
        <label>WNT3A</label>
    </interactant>
    <organismsDiffer>false</organismsDiffer>
    <experiments>5</experiments>
</comment>
<comment type="interaction">
    <interactant intactId="EBI-2868748">
        <id>Q5T9L3</id>
    </interactant>
    <interactant intactId="EBI-6594545">
        <id>P41221</id>
        <label>WNT5A</label>
    </interactant>
    <organismsDiffer>false</organismsDiffer>
    <experiments>3</experiments>
</comment>
<comment type="interaction">
    <interactant intactId="EBI-2868748">
        <id>Q5T9L3</id>
    </interactant>
    <interactant intactId="EBI-727198">
        <id>O00755</id>
        <label>WNT7A</label>
    </interactant>
    <organismsDiffer>false</organismsDiffer>
    <experiments>3</experiments>
</comment>
<comment type="interaction">
    <interactant intactId="EBI-22114623">
        <id>Q5T9L3-1</id>
    </interactant>
    <interactant intactId="EBI-2902702">
        <id>P29274</id>
        <label>ADORA2A</label>
    </interactant>
    <organismsDiffer>false</organismsDiffer>
    <experiments>3</experiments>
</comment>
<comment type="interaction">
    <interactant intactId="EBI-22114623">
        <id>Q5T9L3-1</id>
    </interactant>
    <interactant intactId="EBI-10104898">
        <id>P55087</id>
        <label>AQP4</label>
    </interactant>
    <organismsDiffer>false</organismsDiffer>
    <experiments>3</experiments>
</comment>
<comment type="interaction">
    <interactant intactId="EBI-22114623">
        <id>Q5T9L3-1</id>
    </interactant>
    <interactant intactId="EBI-6309137">
        <id>Q9NPA0</id>
        <label>EMC7</label>
    </interactant>
    <organismsDiffer>false</organismsDiffer>
    <experiments>3</experiments>
</comment>
<comment type="interaction">
    <interactant intactId="EBI-22114623">
        <id>Q5T9L3-1</id>
    </interactant>
    <interactant intactId="EBI-7187133">
        <id>P51674</id>
        <label>GPM6A</label>
    </interactant>
    <organismsDiffer>false</organismsDiffer>
    <experiments>2</experiments>
</comment>
<comment type="interaction">
    <interactant intactId="EBI-22114623">
        <id>Q5T9L3-1</id>
    </interactant>
    <interactant intactId="EBI-2690801">
        <id>Q9BQI5</id>
        <label>SGIP1</label>
    </interactant>
    <organismsDiffer>false</organismsDiffer>
    <experiments>3</experiments>
</comment>
<comment type="interaction">
    <interactant intactId="EBI-22114623">
        <id>Q5T9L3-1</id>
    </interactant>
    <interactant intactId="EBI-22114623">
        <id>Q5T9L3-1</id>
        <label>WLS</label>
    </interactant>
    <organismsDiffer>false</organismsDiffer>
    <experiments>3</experiments>
</comment>
<comment type="subcellular location">
    <subcellularLocation>
        <location evidence="3">Golgi apparatus membrane</location>
        <topology evidence="3">Multi-pass membrane protein</topology>
    </subcellularLocation>
    <subcellularLocation>
        <location evidence="3">Cytoplasmic vesicle membrane</location>
        <topology evidence="3">Multi-pass membrane protein</topology>
    </subcellularLocation>
    <subcellularLocation>
        <location evidence="6">Cell membrane</location>
        <topology evidence="2">Multi-pass membrane protein</topology>
    </subcellularLocation>
    <subcellularLocation>
        <location evidence="6">Endoplasmic reticulum membrane</location>
        <topology evidence="2">Multi-pass membrane protein</topology>
    </subcellularLocation>
    <subcellularLocation>
        <location evidence="6">Golgi apparatus membrane</location>
        <topology evidence="2">Multi-pass membrane protein</topology>
    </subcellularLocation>
    <subcellularLocation>
        <location evidence="6">Early endosome membrane</location>
        <topology evidence="2">Multi-pass membrane protein</topology>
    </subcellularLocation>
    <text evidence="6">Co-localizes with the adaptin AP2A2 at distinct punctae.</text>
</comment>
<comment type="alternative products">
    <event type="alternative splicing"/>
    <isoform>
        <id>Q5T9L3-1</id>
        <name>1</name>
        <sequence type="displayed"/>
    </isoform>
    <isoform>
        <id>Q5T9L3-2</id>
        <name>2</name>
        <sequence type="described" ref="VSP_022346 VSP_022347"/>
    </isoform>
    <isoform>
        <id>Q5T9L3-3</id>
        <name>3</name>
        <sequence type="described" ref="VSP_046143"/>
    </isoform>
</comment>
<comment type="PTM">
    <text evidence="7">N-glycosylated.</text>
</comment>
<comment type="disease" evidence="8">
    <disease id="DI-06290">
        <name>Zaki syndrome</name>
        <acronym>ZKS</acronym>
        <description>An autosomal recessive disorder characterized by developmental delay, progressive microcephaly, and short stature, as well as dysmorphic features including sparse scalp hair, cupped ears, wide nose and mouth, short philtrum, and high-arched palate. Other variable features have been observed, including ocular, skeletal, cardiac, and renal anomalies.</description>
        <dbReference type="MIM" id="619648"/>
    </disease>
    <text>The disease is caused by variants affecting the gene represented in this entry.</text>
</comment>
<comment type="similarity">
    <text evidence="10">Belongs to the wntless family.</text>
</comment>
<evidence type="ECO:0000250" key="1"/>
<evidence type="ECO:0000255" key="2"/>
<evidence type="ECO:0000269" key="3">
    <source>
    </source>
</evidence>
<evidence type="ECO:0000269" key="4">
    <source>
    </source>
</evidence>
<evidence type="ECO:0000269" key="5">
    <source>
    </source>
</evidence>
<evidence type="ECO:0000269" key="6">
    <source>
    </source>
</evidence>
<evidence type="ECO:0000269" key="7">
    <source>
    </source>
</evidence>
<evidence type="ECO:0000269" key="8">
    <source>
    </source>
</evidence>
<evidence type="ECO:0000303" key="9">
    <source>
    </source>
</evidence>
<evidence type="ECO:0000305" key="10"/>
<evidence type="ECO:0000305" key="11">
    <source>
    </source>
</evidence>
<evidence type="ECO:0007829" key="12">
    <source>
        <dbReference type="PDB" id="7DRT"/>
    </source>
</evidence>
<evidence type="ECO:0007829" key="13">
    <source>
        <dbReference type="PDB" id="7KC4"/>
    </source>
</evidence>
<evidence type="ECO:0007829" key="14">
    <source>
        <dbReference type="PDB" id="8TZO"/>
    </source>
</evidence>
<sequence>MAGAIIENMSTKKLCIVGGILLVFQIIAFLVGGLIAPGPTTAVSYMSVKCVDARKNHHKTKWFVPWGPNHCDKIRDIEEAIPREIEANDIVFSVHIPLPHMEMSPWFQFMLFILQLDIAFKLNNQIRENAEVSMDVSLAYRDDAFAEWTEMAHERVPRKLKCTFTSPKTPEHEGRYYECDVLPFMEIGSVAHKFYLLNIRLPVNEKKKINVGIGEIKDIRLVGIHQNGGFTKVWFAMKTFLTPSIFIIMVWYWRRITMMSRPPVLLEKVIFALGISMTFINIPVEWFSIGFDWTWMLLFGDIRQGIFYAMLLSFWIIFCGEHMMDQHERNHIAGYWKQVGPIAVGSFCLFIFDMCERGVQLTNPFYSIWTTDIGTELAMAFIIVAGICLCLYFLFLCFMVFQVFRNISGKQSSLPAMSKVRRLHYEGLIFRFKFLMLITLACAAMTVIFFIVSQVTEGHWKWGGVTVQVNSAFFTGIYGMWNLYVFALMFLYAPSHKNYGEDQSNGDLGVHSGEELQLTTTITHVDGPTEIYKLTRKEAQE</sequence>
<gene>
    <name type="primary">WLS</name>
    <name type="synonym">C1orf139</name>
    <name type="synonym">GPR177</name>
    <name type="ORF">UNQ85/PRO18667</name>
</gene>
<accession>Q5T9L3</accession>
<accession>B2RNT2</accession>
<accession>Q5JRS7</accession>
<accession>Q7Z2Z9</accession>
<accession>Q8NC43</accession>
<keyword id="KW-0002">3D-structure</keyword>
<keyword id="KW-0025">Alternative splicing</keyword>
<keyword id="KW-1003">Cell membrane</keyword>
<keyword id="KW-0968">Cytoplasmic vesicle</keyword>
<keyword id="KW-0217">Developmental protein</keyword>
<keyword id="KW-0225">Disease variant</keyword>
<keyword id="KW-0256">Endoplasmic reticulum</keyword>
<keyword id="KW-0967">Endosome</keyword>
<keyword id="KW-0325">Glycoprotein</keyword>
<keyword id="KW-0333">Golgi apparatus</keyword>
<keyword id="KW-0472">Membrane</keyword>
<keyword id="KW-1267">Proteomics identification</keyword>
<keyword id="KW-1185">Reference proteome</keyword>
<keyword id="KW-0812">Transmembrane</keyword>
<keyword id="KW-1133">Transmembrane helix</keyword>
<keyword id="KW-0879">Wnt signaling pathway</keyword>
<reference key="1">
    <citation type="journal article" date="2006" name="Cell">
        <title>Wntless, a conserved membrane protein dedicated to the secretion of Wnt proteins from signaling cells.</title>
        <authorList>
            <person name="Baenziger C."/>
            <person name="Soldini D."/>
            <person name="Schuett C."/>
            <person name="Zipperlen P."/>
            <person name="Hausmann G."/>
            <person name="Basler K."/>
        </authorList>
    </citation>
    <scope>NUCLEOTIDE SEQUENCE [MRNA] (ISOFORM 1)</scope>
    <scope>FUNCTION</scope>
    <scope>SUBCELLULAR LOCATION</scope>
    <scope>INTERACTION WITH WNT3A</scope>
</reference>
<reference key="2">
    <citation type="journal article" date="2003" name="Genome Res.">
        <title>The secreted protein discovery initiative (SPDI), a large-scale effort to identify novel human secreted and transmembrane proteins: a bioinformatics assessment.</title>
        <authorList>
            <person name="Clark H.F."/>
            <person name="Gurney A.L."/>
            <person name="Abaya E."/>
            <person name="Baker K."/>
            <person name="Baldwin D.T."/>
            <person name="Brush J."/>
            <person name="Chen J."/>
            <person name="Chow B."/>
            <person name="Chui C."/>
            <person name="Crowley C."/>
            <person name="Currell B."/>
            <person name="Deuel B."/>
            <person name="Dowd P."/>
            <person name="Eaton D."/>
            <person name="Foster J.S."/>
            <person name="Grimaldi C."/>
            <person name="Gu Q."/>
            <person name="Hass P.E."/>
            <person name="Heldens S."/>
            <person name="Huang A."/>
            <person name="Kim H.S."/>
            <person name="Klimowski L."/>
            <person name="Jin Y."/>
            <person name="Johnson S."/>
            <person name="Lee J."/>
            <person name="Lewis L."/>
            <person name="Liao D."/>
            <person name="Mark M.R."/>
            <person name="Robbie E."/>
            <person name="Sanchez C."/>
            <person name="Schoenfeld J."/>
            <person name="Seshagiri S."/>
            <person name="Simmons L."/>
            <person name="Singh J."/>
            <person name="Smith V."/>
            <person name="Stinson J."/>
            <person name="Vagts A."/>
            <person name="Vandlen R.L."/>
            <person name="Watanabe C."/>
            <person name="Wieand D."/>
            <person name="Woods K."/>
            <person name="Xie M.-H."/>
            <person name="Yansura D.G."/>
            <person name="Yi S."/>
            <person name="Yu G."/>
            <person name="Yuan J."/>
            <person name="Zhang M."/>
            <person name="Zhang Z."/>
            <person name="Goddard A.D."/>
            <person name="Wood W.I."/>
            <person name="Godowski P.J."/>
            <person name="Gray A.M."/>
        </authorList>
    </citation>
    <scope>NUCLEOTIDE SEQUENCE [LARGE SCALE MRNA] (ISOFORM 1)</scope>
</reference>
<reference key="3">
    <citation type="journal article" date="2004" name="Nat. Genet.">
        <title>Complete sequencing and characterization of 21,243 full-length human cDNAs.</title>
        <authorList>
            <person name="Ota T."/>
            <person name="Suzuki Y."/>
            <person name="Nishikawa T."/>
            <person name="Otsuki T."/>
            <person name="Sugiyama T."/>
            <person name="Irie R."/>
            <person name="Wakamatsu A."/>
            <person name="Hayashi K."/>
            <person name="Sato H."/>
            <person name="Nagai K."/>
            <person name="Kimura K."/>
            <person name="Makita H."/>
            <person name="Sekine M."/>
            <person name="Obayashi M."/>
            <person name="Nishi T."/>
            <person name="Shibahara T."/>
            <person name="Tanaka T."/>
            <person name="Ishii S."/>
            <person name="Yamamoto J."/>
            <person name="Saito K."/>
            <person name="Kawai Y."/>
            <person name="Isono Y."/>
            <person name="Nakamura Y."/>
            <person name="Nagahari K."/>
            <person name="Murakami K."/>
            <person name="Yasuda T."/>
            <person name="Iwayanagi T."/>
            <person name="Wagatsuma M."/>
            <person name="Shiratori A."/>
            <person name="Sudo H."/>
            <person name="Hosoiri T."/>
            <person name="Kaku Y."/>
            <person name="Kodaira H."/>
            <person name="Kondo H."/>
            <person name="Sugawara M."/>
            <person name="Takahashi M."/>
            <person name="Kanda K."/>
            <person name="Yokoi T."/>
            <person name="Furuya T."/>
            <person name="Kikkawa E."/>
            <person name="Omura Y."/>
            <person name="Abe K."/>
            <person name="Kamihara K."/>
            <person name="Katsuta N."/>
            <person name="Sato K."/>
            <person name="Tanikawa M."/>
            <person name="Yamazaki M."/>
            <person name="Ninomiya K."/>
            <person name="Ishibashi T."/>
            <person name="Yamashita H."/>
            <person name="Murakawa K."/>
            <person name="Fujimori K."/>
            <person name="Tanai H."/>
            <person name="Kimata M."/>
            <person name="Watanabe M."/>
            <person name="Hiraoka S."/>
            <person name="Chiba Y."/>
            <person name="Ishida S."/>
            <person name="Ono Y."/>
            <person name="Takiguchi S."/>
            <person name="Watanabe S."/>
            <person name="Yosida M."/>
            <person name="Hotuta T."/>
            <person name="Kusano J."/>
            <person name="Kanehori K."/>
            <person name="Takahashi-Fujii A."/>
            <person name="Hara H."/>
            <person name="Tanase T.-O."/>
            <person name="Nomura Y."/>
            <person name="Togiya S."/>
            <person name="Komai F."/>
            <person name="Hara R."/>
            <person name="Takeuchi K."/>
            <person name="Arita M."/>
            <person name="Imose N."/>
            <person name="Musashino K."/>
            <person name="Yuuki H."/>
            <person name="Oshima A."/>
            <person name="Sasaki N."/>
            <person name="Aotsuka S."/>
            <person name="Yoshikawa Y."/>
            <person name="Matsunawa H."/>
            <person name="Ichihara T."/>
            <person name="Shiohata N."/>
            <person name="Sano S."/>
            <person name="Moriya S."/>
            <person name="Momiyama H."/>
            <person name="Satoh N."/>
            <person name="Takami S."/>
            <person name="Terashima Y."/>
            <person name="Suzuki O."/>
            <person name="Nakagawa S."/>
            <person name="Senoh A."/>
            <person name="Mizoguchi H."/>
            <person name="Goto Y."/>
            <person name="Shimizu F."/>
            <person name="Wakebe H."/>
            <person name="Hishigaki H."/>
            <person name="Watanabe T."/>
            <person name="Sugiyama A."/>
            <person name="Takemoto M."/>
            <person name="Kawakami B."/>
            <person name="Yamazaki M."/>
            <person name="Watanabe K."/>
            <person name="Kumagai A."/>
            <person name="Itakura S."/>
            <person name="Fukuzumi Y."/>
            <person name="Fujimori Y."/>
            <person name="Komiyama M."/>
            <person name="Tashiro H."/>
            <person name="Tanigami A."/>
            <person name="Fujiwara T."/>
            <person name="Ono T."/>
            <person name="Yamada K."/>
            <person name="Fujii Y."/>
            <person name="Ozaki K."/>
            <person name="Hirao M."/>
            <person name="Ohmori Y."/>
            <person name="Kawabata A."/>
            <person name="Hikiji T."/>
            <person name="Kobatake N."/>
            <person name="Inagaki H."/>
            <person name="Ikema Y."/>
            <person name="Okamoto S."/>
            <person name="Okitani R."/>
            <person name="Kawakami T."/>
            <person name="Noguchi S."/>
            <person name="Itoh T."/>
            <person name="Shigeta K."/>
            <person name="Senba T."/>
            <person name="Matsumura K."/>
            <person name="Nakajima Y."/>
            <person name="Mizuno T."/>
            <person name="Morinaga M."/>
            <person name="Sasaki M."/>
            <person name="Togashi T."/>
            <person name="Oyama M."/>
            <person name="Hata H."/>
            <person name="Watanabe M."/>
            <person name="Komatsu T."/>
            <person name="Mizushima-Sugano J."/>
            <person name="Satoh T."/>
            <person name="Shirai Y."/>
            <person name="Takahashi Y."/>
            <person name="Nakagawa K."/>
            <person name="Okumura K."/>
            <person name="Nagase T."/>
            <person name="Nomura N."/>
            <person name="Kikuchi H."/>
            <person name="Masuho Y."/>
            <person name="Yamashita R."/>
            <person name="Nakai K."/>
            <person name="Yada T."/>
            <person name="Nakamura Y."/>
            <person name="Ohara O."/>
            <person name="Isogai T."/>
            <person name="Sugano S."/>
        </authorList>
    </citation>
    <scope>NUCLEOTIDE SEQUENCE [LARGE SCALE MRNA] (ISOFORM 1)</scope>
</reference>
<reference key="4">
    <citation type="journal article" date="2007" name="BMC Genomics">
        <title>The full-ORF clone resource of the German cDNA consortium.</title>
        <authorList>
            <person name="Bechtel S."/>
            <person name="Rosenfelder H."/>
            <person name="Duda A."/>
            <person name="Schmidt C.P."/>
            <person name="Ernst U."/>
            <person name="Wellenreuther R."/>
            <person name="Mehrle A."/>
            <person name="Schuster C."/>
            <person name="Bahr A."/>
            <person name="Bloecker H."/>
            <person name="Heubner D."/>
            <person name="Hoerlein A."/>
            <person name="Michel G."/>
            <person name="Wedler H."/>
            <person name="Koehrer K."/>
            <person name="Ottenwaelder B."/>
            <person name="Poustka A."/>
            <person name="Wiemann S."/>
            <person name="Schupp I."/>
        </authorList>
    </citation>
    <scope>NUCLEOTIDE SEQUENCE [LARGE SCALE MRNA] (ISOFORMS 2 AND 3)</scope>
    <scope>VARIANT ILE-465</scope>
    <source>
        <tissue>Endometrium</tissue>
        <tissue>Uterus</tissue>
    </source>
</reference>
<reference key="5">
    <citation type="journal article" date="2006" name="Nature">
        <title>The DNA sequence and biological annotation of human chromosome 1.</title>
        <authorList>
            <person name="Gregory S.G."/>
            <person name="Barlow K.F."/>
            <person name="McLay K.E."/>
            <person name="Kaul R."/>
            <person name="Swarbreck D."/>
            <person name="Dunham A."/>
            <person name="Scott C.E."/>
            <person name="Howe K.L."/>
            <person name="Woodfine K."/>
            <person name="Spencer C.C.A."/>
            <person name="Jones M.C."/>
            <person name="Gillson C."/>
            <person name="Searle S."/>
            <person name="Zhou Y."/>
            <person name="Kokocinski F."/>
            <person name="McDonald L."/>
            <person name="Evans R."/>
            <person name="Phillips K."/>
            <person name="Atkinson A."/>
            <person name="Cooper R."/>
            <person name="Jones C."/>
            <person name="Hall R.E."/>
            <person name="Andrews T.D."/>
            <person name="Lloyd C."/>
            <person name="Ainscough R."/>
            <person name="Almeida J.P."/>
            <person name="Ambrose K.D."/>
            <person name="Anderson F."/>
            <person name="Andrew R.W."/>
            <person name="Ashwell R.I.S."/>
            <person name="Aubin K."/>
            <person name="Babbage A.K."/>
            <person name="Bagguley C.L."/>
            <person name="Bailey J."/>
            <person name="Beasley H."/>
            <person name="Bethel G."/>
            <person name="Bird C.P."/>
            <person name="Bray-Allen S."/>
            <person name="Brown J.Y."/>
            <person name="Brown A.J."/>
            <person name="Buckley D."/>
            <person name="Burton J."/>
            <person name="Bye J."/>
            <person name="Carder C."/>
            <person name="Chapman J.C."/>
            <person name="Clark S.Y."/>
            <person name="Clarke G."/>
            <person name="Clee C."/>
            <person name="Cobley V."/>
            <person name="Collier R.E."/>
            <person name="Corby N."/>
            <person name="Coville G.J."/>
            <person name="Davies J."/>
            <person name="Deadman R."/>
            <person name="Dunn M."/>
            <person name="Earthrowl M."/>
            <person name="Ellington A.G."/>
            <person name="Errington H."/>
            <person name="Frankish A."/>
            <person name="Frankland J."/>
            <person name="French L."/>
            <person name="Garner P."/>
            <person name="Garnett J."/>
            <person name="Gay L."/>
            <person name="Ghori M.R.J."/>
            <person name="Gibson R."/>
            <person name="Gilby L.M."/>
            <person name="Gillett W."/>
            <person name="Glithero R.J."/>
            <person name="Grafham D.V."/>
            <person name="Griffiths C."/>
            <person name="Griffiths-Jones S."/>
            <person name="Grocock R."/>
            <person name="Hammond S."/>
            <person name="Harrison E.S.I."/>
            <person name="Hart E."/>
            <person name="Haugen E."/>
            <person name="Heath P.D."/>
            <person name="Holmes S."/>
            <person name="Holt K."/>
            <person name="Howden P.J."/>
            <person name="Hunt A.R."/>
            <person name="Hunt S.E."/>
            <person name="Hunter G."/>
            <person name="Isherwood J."/>
            <person name="James R."/>
            <person name="Johnson C."/>
            <person name="Johnson D."/>
            <person name="Joy A."/>
            <person name="Kay M."/>
            <person name="Kershaw J.K."/>
            <person name="Kibukawa M."/>
            <person name="Kimberley A.M."/>
            <person name="King A."/>
            <person name="Knights A.J."/>
            <person name="Lad H."/>
            <person name="Laird G."/>
            <person name="Lawlor S."/>
            <person name="Leongamornlert D.A."/>
            <person name="Lloyd D.M."/>
            <person name="Loveland J."/>
            <person name="Lovell J."/>
            <person name="Lush M.J."/>
            <person name="Lyne R."/>
            <person name="Martin S."/>
            <person name="Mashreghi-Mohammadi M."/>
            <person name="Matthews L."/>
            <person name="Matthews N.S.W."/>
            <person name="McLaren S."/>
            <person name="Milne S."/>
            <person name="Mistry S."/>
            <person name="Moore M.J.F."/>
            <person name="Nickerson T."/>
            <person name="O'Dell C.N."/>
            <person name="Oliver K."/>
            <person name="Palmeiri A."/>
            <person name="Palmer S.A."/>
            <person name="Parker A."/>
            <person name="Patel D."/>
            <person name="Pearce A.V."/>
            <person name="Peck A.I."/>
            <person name="Pelan S."/>
            <person name="Phelps K."/>
            <person name="Phillimore B.J."/>
            <person name="Plumb R."/>
            <person name="Rajan J."/>
            <person name="Raymond C."/>
            <person name="Rouse G."/>
            <person name="Saenphimmachak C."/>
            <person name="Sehra H.K."/>
            <person name="Sheridan E."/>
            <person name="Shownkeen R."/>
            <person name="Sims S."/>
            <person name="Skuce C.D."/>
            <person name="Smith M."/>
            <person name="Steward C."/>
            <person name="Subramanian S."/>
            <person name="Sycamore N."/>
            <person name="Tracey A."/>
            <person name="Tromans A."/>
            <person name="Van Helmond Z."/>
            <person name="Wall M."/>
            <person name="Wallis J.M."/>
            <person name="White S."/>
            <person name="Whitehead S.L."/>
            <person name="Wilkinson J.E."/>
            <person name="Willey D.L."/>
            <person name="Williams H."/>
            <person name="Wilming L."/>
            <person name="Wray P.W."/>
            <person name="Wu Z."/>
            <person name="Coulson A."/>
            <person name="Vaudin M."/>
            <person name="Sulston J.E."/>
            <person name="Durbin R.M."/>
            <person name="Hubbard T."/>
            <person name="Wooster R."/>
            <person name="Dunham I."/>
            <person name="Carter N.P."/>
            <person name="McVean G."/>
            <person name="Ross M.T."/>
            <person name="Harrow J."/>
            <person name="Olson M.V."/>
            <person name="Beck S."/>
            <person name="Rogers J."/>
            <person name="Bentley D.R."/>
        </authorList>
    </citation>
    <scope>NUCLEOTIDE SEQUENCE [LARGE SCALE GENOMIC DNA]</scope>
</reference>
<reference key="6">
    <citation type="submission" date="2005-09" db="EMBL/GenBank/DDBJ databases">
        <authorList>
            <person name="Mural R.J."/>
            <person name="Istrail S."/>
            <person name="Sutton G.G."/>
            <person name="Florea L."/>
            <person name="Halpern A.L."/>
            <person name="Mobarry C.M."/>
            <person name="Lippert R."/>
            <person name="Walenz B."/>
            <person name="Shatkay H."/>
            <person name="Dew I."/>
            <person name="Miller J.R."/>
            <person name="Flanigan M.J."/>
            <person name="Edwards N.J."/>
            <person name="Bolanos R."/>
            <person name="Fasulo D."/>
            <person name="Halldorsson B.V."/>
            <person name="Hannenhalli S."/>
            <person name="Turner R."/>
            <person name="Yooseph S."/>
            <person name="Lu F."/>
            <person name="Nusskern D.R."/>
            <person name="Shue B.C."/>
            <person name="Zheng X.H."/>
            <person name="Zhong F."/>
            <person name="Delcher A.L."/>
            <person name="Huson D.H."/>
            <person name="Kravitz S.A."/>
            <person name="Mouchard L."/>
            <person name="Reinert K."/>
            <person name="Remington K.A."/>
            <person name="Clark A.G."/>
            <person name="Waterman M.S."/>
            <person name="Eichler E.E."/>
            <person name="Adams M.D."/>
            <person name="Hunkapiller M.W."/>
            <person name="Myers E.W."/>
            <person name="Venter J.C."/>
        </authorList>
    </citation>
    <scope>NUCLEOTIDE SEQUENCE [LARGE SCALE GENOMIC DNA]</scope>
</reference>
<reference key="7">
    <citation type="journal article" date="2004" name="Genome Res.">
        <title>The status, quality, and expansion of the NIH full-length cDNA project: the Mammalian Gene Collection (MGC).</title>
        <authorList>
            <consortium name="The MGC Project Team"/>
        </authorList>
    </citation>
    <scope>NUCLEOTIDE SEQUENCE [LARGE SCALE MRNA] (ISOFORM 1)</scope>
    <source>
        <tissue>Lung</tissue>
        <tissue>PNS</tissue>
    </source>
</reference>
<reference key="8">
    <citation type="journal article" date="2006" name="Cell">
        <title>Secretion of Wnt ligands requires Evi, a conserved transmembrane protein.</title>
        <authorList>
            <person name="Bartscherer K."/>
            <person name="Pelte N."/>
            <person name="Ingelfinger D."/>
            <person name="Boutros M."/>
        </authorList>
    </citation>
    <scope>FUNCTION</scope>
</reference>
<reference key="9">
    <citation type="journal article" date="2008" name="Dev. Cell">
        <title>Wnt signaling requires retromer-dependent recycling of MIG-14/Wntless in Wnt-producing cells.</title>
        <authorList>
            <person name="Yang P.T."/>
            <person name="Lorenowicz M.J."/>
            <person name="Silhankova M."/>
            <person name="Coudreuse D.Y."/>
            <person name="Betist M.C."/>
            <person name="Korswagen H.C."/>
        </authorList>
    </citation>
    <scope>SUBCELLULAR LOCATION</scope>
</reference>
<reference key="10">
    <citation type="journal article" date="2010" name="Dev. Dyn.">
        <title>Expression of GPR177 (Wntless/Evi/Sprinter), a highly conserved Wnt-transport protein, in rat tissues, zebrafish embryos, and cultured human cells.</title>
        <authorList>
            <person name="Jin J."/>
            <person name="Morse M."/>
            <person name="Frey C."/>
            <person name="Petko J."/>
            <person name="Levenson R."/>
        </authorList>
    </citation>
    <scope>GLYCOSYLATION</scope>
    <scope>TOPOLOGY</scope>
</reference>
<reference key="11">
    <citation type="journal article" date="2011" name="BMC Syst. Biol.">
        <title>Initial characterization of the human central proteome.</title>
        <authorList>
            <person name="Burkard T.R."/>
            <person name="Planyavsky M."/>
            <person name="Kaupe I."/>
            <person name="Breitwieser F.P."/>
            <person name="Buerckstuemmer T."/>
            <person name="Bennett K.L."/>
            <person name="Superti-Furga G."/>
            <person name="Colinge J."/>
        </authorList>
    </citation>
    <scope>IDENTIFICATION BY MASS SPECTROMETRY [LARGE SCALE ANALYSIS]</scope>
</reference>
<reference key="12">
    <citation type="journal article" date="2021" name="N. Engl. J. Med.">
        <title>A human pleiotropic multiorgan condition caused by deficient Wnt secretion.</title>
        <authorList>
            <person name="Chai G."/>
            <person name="Szenker-Ravi E."/>
            <person name="Chung C."/>
            <person name="Li Z."/>
            <person name="Wang L."/>
            <person name="Khatoo M."/>
            <person name="Marshall T."/>
            <person name="Jiang N."/>
            <person name="Yang X."/>
            <person name="McEvoy-Venneri J."/>
            <person name="Stanley V."/>
            <person name="Anzenberg P."/>
            <person name="Lang N."/>
            <person name="Wazny V."/>
            <person name="Yu J."/>
            <person name="Virshup D.M."/>
            <person name="Nygaard R."/>
            <person name="Mancia F."/>
            <person name="Merdzanic R."/>
            <person name="Toralles M.B.P."/>
            <person name="Pitanga P.M.L."/>
            <person name="Puri R.D."/>
            <person name="Hernan R."/>
            <person name="Chung W.K."/>
            <person name="Bertoli-Avella A.M."/>
            <person name="Al-Sannaa N."/>
            <person name="Zaki M.S."/>
            <person name="Willert K."/>
            <person name="Reversade B."/>
            <person name="Gleeson J.G."/>
        </authorList>
    </citation>
    <scope>VARIANTS ZKS CYS-392; CYS-478; THR-531 AND CYS-536</scope>
    <scope>CHARACTERIZATION OF VARIANTS ZKS CYS-392; CYS-478; THR-531 AND CYS-536</scope>
    <scope>INVOLVEMENT IN ZKS</scope>
    <scope>FUNCTION</scope>
</reference>
<organism>
    <name type="scientific">Homo sapiens</name>
    <name type="common">Human</name>
    <dbReference type="NCBI Taxonomy" id="9606"/>
    <lineage>
        <taxon>Eukaryota</taxon>
        <taxon>Metazoa</taxon>
        <taxon>Chordata</taxon>
        <taxon>Craniata</taxon>
        <taxon>Vertebrata</taxon>
        <taxon>Euteleostomi</taxon>
        <taxon>Mammalia</taxon>
        <taxon>Eutheria</taxon>
        <taxon>Euarchontoglires</taxon>
        <taxon>Primates</taxon>
        <taxon>Haplorrhini</taxon>
        <taxon>Catarrhini</taxon>
        <taxon>Hominidae</taxon>
        <taxon>Homo</taxon>
    </lineage>
</organism>
<proteinExistence type="evidence at protein level"/>
<dbReference type="EMBL" id="DQ323735">
    <property type="protein sequence ID" value="ABD58927.1"/>
    <property type="molecule type" value="mRNA"/>
</dbReference>
<dbReference type="EMBL" id="AY359035">
    <property type="protein sequence ID" value="AAQ89394.1"/>
    <property type="molecule type" value="mRNA"/>
</dbReference>
<dbReference type="EMBL" id="AK074984">
    <property type="protein sequence ID" value="BAC11333.1"/>
    <property type="molecule type" value="mRNA"/>
</dbReference>
<dbReference type="EMBL" id="BX538320">
    <property type="protein sequence ID" value="CAD98094.1"/>
    <property type="molecule type" value="mRNA"/>
</dbReference>
<dbReference type="EMBL" id="BX648748">
    <property type="status" value="NOT_ANNOTATED_CDS"/>
    <property type="molecule type" value="mRNA"/>
</dbReference>
<dbReference type="EMBL" id="AL513284">
    <property type="status" value="NOT_ANNOTATED_CDS"/>
    <property type="molecule type" value="Genomic_DNA"/>
</dbReference>
<dbReference type="EMBL" id="AL157407">
    <property type="status" value="NOT_ANNOTATED_CDS"/>
    <property type="molecule type" value="Genomic_DNA"/>
</dbReference>
<dbReference type="EMBL" id="CH471059">
    <property type="protein sequence ID" value="EAX06480.1"/>
    <property type="molecule type" value="Genomic_DNA"/>
</dbReference>
<dbReference type="EMBL" id="CH471059">
    <property type="protein sequence ID" value="EAX06481.1"/>
    <property type="molecule type" value="Genomic_DNA"/>
</dbReference>
<dbReference type="EMBL" id="BC110826">
    <property type="protein sequence ID" value="AAI10827.1"/>
    <property type="molecule type" value="mRNA"/>
</dbReference>
<dbReference type="EMBL" id="BC137109">
    <property type="protein sequence ID" value="AAI37110.1"/>
    <property type="molecule type" value="mRNA"/>
</dbReference>
<dbReference type="EMBL" id="BC137113">
    <property type="protein sequence ID" value="AAI37114.1"/>
    <property type="molecule type" value="mRNA"/>
</dbReference>
<dbReference type="CCDS" id="CCDS30750.1">
    <molecule id="Q5T9L3-2"/>
</dbReference>
<dbReference type="CCDS" id="CCDS53331.1">
    <molecule id="Q5T9L3-3"/>
</dbReference>
<dbReference type="CCDS" id="CCDS642.1">
    <molecule id="Q5T9L3-1"/>
</dbReference>
<dbReference type="RefSeq" id="NP_001002292.3">
    <molecule id="Q5T9L3-2"/>
    <property type="nucleotide sequence ID" value="NM_001002292.4"/>
</dbReference>
<dbReference type="RefSeq" id="NP_001180263.1">
    <molecule id="Q5T9L3-3"/>
    <property type="nucleotide sequence ID" value="NM_001193334.1"/>
</dbReference>
<dbReference type="RefSeq" id="NP_079187.3">
    <molecule id="Q5T9L3-1"/>
    <property type="nucleotide sequence ID" value="NM_024911.6"/>
</dbReference>
<dbReference type="PDB" id="7DRT">
    <property type="method" value="EM"/>
    <property type="resolution" value="2.20 A"/>
    <property type="chains" value="B=1-541"/>
</dbReference>
<dbReference type="PDB" id="7KC4">
    <property type="method" value="EM"/>
    <property type="resolution" value="3.19 A"/>
    <property type="chains" value="B=1-541"/>
</dbReference>
<dbReference type="PDB" id="8TZO">
    <property type="method" value="EM"/>
    <property type="resolution" value="3.10 A"/>
    <property type="chains" value="B=1-541"/>
</dbReference>
<dbReference type="PDB" id="8TZP">
    <property type="method" value="EM"/>
    <property type="resolution" value="3.23 A"/>
    <property type="chains" value="B=1-541"/>
</dbReference>
<dbReference type="PDB" id="8TZR">
    <property type="method" value="EM"/>
    <property type="resolution" value="3.50 A"/>
    <property type="chains" value="B=1-541"/>
</dbReference>
<dbReference type="PDB" id="8TZS">
    <property type="method" value="EM"/>
    <property type="resolution" value="3.84 A"/>
    <property type="chains" value="A=1-541"/>
</dbReference>
<dbReference type="PDBsum" id="7DRT"/>
<dbReference type="PDBsum" id="7KC4"/>
<dbReference type="PDBsum" id="8TZO"/>
<dbReference type="PDBsum" id="8TZP"/>
<dbReference type="PDBsum" id="8TZR"/>
<dbReference type="PDBsum" id="8TZS"/>
<dbReference type="EMDB" id="EMD-22806"/>
<dbReference type="EMDB" id="EMD-30827"/>
<dbReference type="EMDB" id="EMD-41764"/>
<dbReference type="EMDB" id="EMD-41765"/>
<dbReference type="EMDB" id="EMD-41767"/>
<dbReference type="EMDB" id="EMD-41768"/>
<dbReference type="SMR" id="Q5T9L3"/>
<dbReference type="BioGRID" id="123038">
    <property type="interactions" value="120"/>
</dbReference>
<dbReference type="FunCoup" id="Q5T9L3">
    <property type="interactions" value="1688"/>
</dbReference>
<dbReference type="IntAct" id="Q5T9L3">
    <property type="interactions" value="97"/>
</dbReference>
<dbReference type="MINT" id="Q5T9L3"/>
<dbReference type="STRING" id="9606.ENSP00000346829"/>
<dbReference type="TCDB" id="8.A.56.1.2">
    <property type="family name" value="the wntless protein (wls) family"/>
</dbReference>
<dbReference type="GlyGen" id="Q5T9L3">
    <property type="glycosylation" value="3 sites, 1 N-linked glycan (1 site), 1 O-linked glycan (1 site)"/>
</dbReference>
<dbReference type="iPTMnet" id="Q5T9L3"/>
<dbReference type="PhosphoSitePlus" id="Q5T9L3"/>
<dbReference type="BioMuta" id="WLS"/>
<dbReference type="DMDM" id="122063496"/>
<dbReference type="jPOST" id="Q5T9L3"/>
<dbReference type="MassIVE" id="Q5T9L3"/>
<dbReference type="PaxDb" id="9606-ENSP00000346829"/>
<dbReference type="PeptideAtlas" id="Q5T9L3"/>
<dbReference type="ProteomicsDB" id="63111"/>
<dbReference type="ProteomicsDB" id="64804">
    <molecule id="Q5T9L3-1"/>
</dbReference>
<dbReference type="ProteomicsDB" id="64805">
    <molecule id="Q5T9L3-2"/>
</dbReference>
<dbReference type="Pumba" id="Q5T9L3"/>
<dbReference type="Antibodypedia" id="33415">
    <property type="antibodies" value="126 antibodies from 29 providers"/>
</dbReference>
<dbReference type="DNASU" id="79971"/>
<dbReference type="Ensembl" id="ENST00000262348.9">
    <molecule id="Q5T9L3-1"/>
    <property type="protein sequence ID" value="ENSP00000262348.4"/>
    <property type="gene ID" value="ENSG00000116729.14"/>
</dbReference>
<dbReference type="Ensembl" id="ENST00000354777.6">
    <molecule id="Q5T9L3-2"/>
    <property type="protein sequence ID" value="ENSP00000346829.2"/>
    <property type="gene ID" value="ENSG00000116729.14"/>
</dbReference>
<dbReference type="Ensembl" id="ENST00000370976.7">
    <molecule id="Q5T9L3-3"/>
    <property type="protein sequence ID" value="ENSP00000360015.3"/>
    <property type="gene ID" value="ENSG00000116729.14"/>
</dbReference>
<dbReference type="GeneID" id="79971"/>
<dbReference type="KEGG" id="hsa:79971"/>
<dbReference type="MANE-Select" id="ENST00000262348.9">
    <property type="protein sequence ID" value="ENSP00000262348.4"/>
    <property type="RefSeq nucleotide sequence ID" value="NM_024911.7"/>
    <property type="RefSeq protein sequence ID" value="NP_079187.3"/>
</dbReference>
<dbReference type="UCSC" id="uc001dee.4">
    <molecule id="Q5T9L3-1"/>
    <property type="organism name" value="human"/>
</dbReference>
<dbReference type="AGR" id="HGNC:30238"/>
<dbReference type="CTD" id="79971"/>
<dbReference type="DisGeNET" id="79971"/>
<dbReference type="GeneCards" id="WLS"/>
<dbReference type="HGNC" id="HGNC:30238">
    <property type="gene designation" value="WLS"/>
</dbReference>
<dbReference type="HPA" id="ENSG00000116729">
    <property type="expression patterns" value="Low tissue specificity"/>
</dbReference>
<dbReference type="MalaCards" id="WLS"/>
<dbReference type="MIM" id="611514">
    <property type="type" value="gene"/>
</dbReference>
<dbReference type="MIM" id="619648">
    <property type="type" value="phenotype"/>
</dbReference>
<dbReference type="neXtProt" id="NX_Q5T9L3"/>
<dbReference type="OpenTargets" id="ENSG00000116729"/>
<dbReference type="PharmGKB" id="PA165752781"/>
<dbReference type="VEuPathDB" id="HostDB:ENSG00000116729"/>
<dbReference type="eggNOG" id="ENOG502QSE2">
    <property type="taxonomic scope" value="Eukaryota"/>
</dbReference>
<dbReference type="GeneTree" id="ENSGT00390000005897"/>
<dbReference type="HOGENOM" id="CLU_022911_0_0_1"/>
<dbReference type="InParanoid" id="Q5T9L3"/>
<dbReference type="OMA" id="GQWKWDE"/>
<dbReference type="OrthoDB" id="5804250at2759"/>
<dbReference type="PAN-GO" id="Q5T9L3">
    <property type="GO annotations" value="5 GO annotations based on evolutionary models"/>
</dbReference>
<dbReference type="PhylomeDB" id="Q5T9L3"/>
<dbReference type="TreeFam" id="TF105975"/>
<dbReference type="PathwayCommons" id="Q5T9L3"/>
<dbReference type="Reactome" id="R-HSA-3238698">
    <property type="pathway name" value="WNT ligand biogenesis and trafficking"/>
</dbReference>
<dbReference type="SignaLink" id="Q5T9L3"/>
<dbReference type="SIGNOR" id="Q5T9L3"/>
<dbReference type="BioGRID-ORCS" id="79971">
    <property type="hits" value="21 hits in 1158 CRISPR screens"/>
</dbReference>
<dbReference type="ChiTaRS" id="WLS">
    <property type="organism name" value="human"/>
</dbReference>
<dbReference type="GeneWiki" id="GPR177"/>
<dbReference type="GenomeRNAi" id="79971"/>
<dbReference type="Pharos" id="Q5T9L3">
    <property type="development level" value="Tbio"/>
</dbReference>
<dbReference type="PRO" id="PR:Q5T9L3"/>
<dbReference type="Proteomes" id="UP000005640">
    <property type="component" value="Chromosome 1"/>
</dbReference>
<dbReference type="RNAct" id="Q5T9L3">
    <property type="molecule type" value="protein"/>
</dbReference>
<dbReference type="Bgee" id="ENSG00000116729">
    <property type="expression patterns" value="Expressed in stromal cell of endometrium and 202 other cell types or tissues"/>
</dbReference>
<dbReference type="ExpressionAtlas" id="Q5T9L3">
    <property type="expression patterns" value="baseline and differential"/>
</dbReference>
<dbReference type="GO" id="GO:0031410">
    <property type="term" value="C:cytoplasmic vesicle"/>
    <property type="evidence" value="ECO:0000314"/>
    <property type="project" value="ParkinsonsUK-UCL"/>
</dbReference>
<dbReference type="GO" id="GO:0005829">
    <property type="term" value="C:cytosol"/>
    <property type="evidence" value="ECO:0000314"/>
    <property type="project" value="HPA"/>
</dbReference>
<dbReference type="GO" id="GO:0005769">
    <property type="term" value="C:early endosome"/>
    <property type="evidence" value="ECO:0000314"/>
    <property type="project" value="ParkinsonsUK-UCL"/>
</dbReference>
<dbReference type="GO" id="GO:0031901">
    <property type="term" value="C:early endosome membrane"/>
    <property type="evidence" value="ECO:0000304"/>
    <property type="project" value="Reactome"/>
</dbReference>
<dbReference type="GO" id="GO:0030666">
    <property type="term" value="C:endocytic vesicle membrane"/>
    <property type="evidence" value="ECO:0000304"/>
    <property type="project" value="Reactome"/>
</dbReference>
<dbReference type="GO" id="GO:0012505">
    <property type="term" value="C:endomembrane system"/>
    <property type="evidence" value="ECO:0000318"/>
    <property type="project" value="GO_Central"/>
</dbReference>
<dbReference type="GO" id="GO:0005783">
    <property type="term" value="C:endoplasmic reticulum"/>
    <property type="evidence" value="ECO:0000314"/>
    <property type="project" value="HPA"/>
</dbReference>
<dbReference type="GO" id="GO:0005789">
    <property type="term" value="C:endoplasmic reticulum membrane"/>
    <property type="evidence" value="ECO:0000314"/>
    <property type="project" value="WormBase"/>
</dbReference>
<dbReference type="GO" id="GO:0070062">
    <property type="term" value="C:extracellular exosome"/>
    <property type="evidence" value="ECO:0000304"/>
    <property type="project" value="Reactome"/>
</dbReference>
<dbReference type="GO" id="GO:0005794">
    <property type="term" value="C:Golgi apparatus"/>
    <property type="evidence" value="ECO:0000314"/>
    <property type="project" value="ParkinsonsUK-UCL"/>
</dbReference>
<dbReference type="GO" id="GO:0000139">
    <property type="term" value="C:Golgi membrane"/>
    <property type="evidence" value="ECO:0000314"/>
    <property type="project" value="WormBase"/>
</dbReference>
<dbReference type="GO" id="GO:0031090">
    <property type="term" value="C:organelle membrane"/>
    <property type="evidence" value="ECO:0000318"/>
    <property type="project" value="GO_Central"/>
</dbReference>
<dbReference type="GO" id="GO:0005886">
    <property type="term" value="C:plasma membrane"/>
    <property type="evidence" value="ECO:0000314"/>
    <property type="project" value="ParkinsonsUK-UCL"/>
</dbReference>
<dbReference type="GO" id="GO:0005802">
    <property type="term" value="C:trans-Golgi network"/>
    <property type="evidence" value="ECO:0000314"/>
    <property type="project" value="ParkinsonsUK-UCL"/>
</dbReference>
<dbReference type="GO" id="GO:0042802">
    <property type="term" value="F:identical protein binding"/>
    <property type="evidence" value="ECO:0000353"/>
    <property type="project" value="IntAct"/>
</dbReference>
<dbReference type="GO" id="GO:0017147">
    <property type="term" value="F:Wnt-protein binding"/>
    <property type="evidence" value="ECO:0000353"/>
    <property type="project" value="WormBase"/>
</dbReference>
<dbReference type="GO" id="GO:0009948">
    <property type="term" value="P:anterior/posterior axis specification"/>
    <property type="evidence" value="ECO:0000250"/>
    <property type="project" value="UniProtKB"/>
</dbReference>
<dbReference type="GO" id="GO:0071529">
    <property type="term" value="P:cementum mineralization"/>
    <property type="evidence" value="ECO:0007669"/>
    <property type="project" value="Ensembl"/>
</dbReference>
<dbReference type="GO" id="GO:0031017">
    <property type="term" value="P:exocrine pancreas development"/>
    <property type="evidence" value="ECO:0007669"/>
    <property type="project" value="Ensembl"/>
</dbReference>
<dbReference type="GO" id="GO:0030902">
    <property type="term" value="P:hindbrain development"/>
    <property type="evidence" value="ECO:0007669"/>
    <property type="project" value="Ensembl"/>
</dbReference>
<dbReference type="GO" id="GO:0006886">
    <property type="term" value="P:intracellular protein transport"/>
    <property type="evidence" value="ECO:0000315"/>
    <property type="project" value="ParkinsonsUK-UCL"/>
</dbReference>
<dbReference type="GO" id="GO:0001707">
    <property type="term" value="P:mesoderm formation"/>
    <property type="evidence" value="ECO:0007669"/>
    <property type="project" value="Ensembl"/>
</dbReference>
<dbReference type="GO" id="GO:0030901">
    <property type="term" value="P:midbrain development"/>
    <property type="evidence" value="ECO:0007669"/>
    <property type="project" value="Ensembl"/>
</dbReference>
<dbReference type="GO" id="GO:0043123">
    <property type="term" value="P:positive regulation of canonical NF-kappaB signal transduction"/>
    <property type="evidence" value="ECO:0000250"/>
    <property type="project" value="UniProtKB"/>
</dbReference>
<dbReference type="GO" id="GO:0090263">
    <property type="term" value="P:positive regulation of canonical Wnt signaling pathway"/>
    <property type="evidence" value="ECO:0000315"/>
    <property type="project" value="BHF-UCL"/>
</dbReference>
<dbReference type="GO" id="GO:0061357">
    <property type="term" value="P:positive regulation of Wnt protein secretion"/>
    <property type="evidence" value="ECO:0000315"/>
    <property type="project" value="ParkinsonsUK-UCL"/>
</dbReference>
<dbReference type="GO" id="GO:0030177">
    <property type="term" value="P:positive regulation of Wnt signaling pathway"/>
    <property type="evidence" value="ECO:0000315"/>
    <property type="project" value="ParkinsonsUK-UCL"/>
</dbReference>
<dbReference type="GO" id="GO:0061355">
    <property type="term" value="P:Wnt protein secretion"/>
    <property type="evidence" value="ECO:0000315"/>
    <property type="project" value="WormBase"/>
</dbReference>
<dbReference type="GO" id="GO:0016055">
    <property type="term" value="P:Wnt signaling pathway"/>
    <property type="evidence" value="ECO:0007669"/>
    <property type="project" value="UniProtKB-KW"/>
</dbReference>
<dbReference type="InterPro" id="IPR047843">
    <property type="entry name" value="WLS-like_TM"/>
</dbReference>
<dbReference type="InterPro" id="IPR053936">
    <property type="entry name" value="WLS_GOLD"/>
</dbReference>
<dbReference type="InterPro" id="IPR009551">
    <property type="entry name" value="Wntless"/>
</dbReference>
<dbReference type="PANTHER" id="PTHR13449">
    <property type="entry name" value="INTEGRAL MEMBRANE PROTEIN GPR177"/>
    <property type="match status" value="1"/>
</dbReference>
<dbReference type="PANTHER" id="PTHR13449:SF2">
    <property type="entry name" value="PROTEIN WNTLESS HOMOLOG"/>
    <property type="match status" value="1"/>
</dbReference>
<dbReference type="Pfam" id="PF06664">
    <property type="entry name" value="WLS-like_TM"/>
    <property type="match status" value="1"/>
</dbReference>
<dbReference type="Pfam" id="PF21883">
    <property type="entry name" value="WLS_GOLD"/>
    <property type="match status" value="1"/>
</dbReference>
<feature type="chain" id="PRO_0000271777" description="Protein wntless homolog">
    <location>
        <begin position="1"/>
        <end position="541"/>
    </location>
</feature>
<feature type="topological domain" description="Cytoplasmic" evidence="11">
    <location>
        <begin position="1"/>
        <end position="15"/>
    </location>
</feature>
<feature type="transmembrane region" description="Helical; Name=1" evidence="2">
    <location>
        <begin position="16"/>
        <end position="36"/>
    </location>
</feature>
<feature type="topological domain" description="Lumenal" evidence="11">
    <location>
        <begin position="37"/>
        <end position="232"/>
    </location>
</feature>
<feature type="transmembrane region" description="Helical; Name=2" evidence="11">
    <location>
        <begin position="233"/>
        <end position="253"/>
    </location>
</feature>
<feature type="topological domain" description="Cytoplasmic" evidence="11">
    <location>
        <begin position="254"/>
        <end position="268"/>
    </location>
</feature>
<feature type="transmembrane region" description="Helical; Name=3" evidence="11">
    <location>
        <begin position="269"/>
        <end position="289"/>
    </location>
</feature>
<feature type="topological domain" description="Lumenal" evidence="11">
    <location>
        <begin position="290"/>
        <end position="303"/>
    </location>
</feature>
<feature type="transmembrane region" description="Helical; Name=4" evidence="11">
    <location>
        <begin position="304"/>
        <end position="324"/>
    </location>
</feature>
<feature type="topological domain" description="Cytoplasmic" evidence="11">
    <location>
        <begin position="325"/>
        <end position="331"/>
    </location>
</feature>
<feature type="transmembrane region" description="Helical; Name=5" evidence="11">
    <location>
        <begin position="332"/>
        <end position="352"/>
    </location>
</feature>
<feature type="topological domain" description="Lumenal" evidence="11">
    <location>
        <begin position="353"/>
        <end position="380"/>
    </location>
</feature>
<feature type="transmembrane region" description="Helical; Name=6" evidence="11">
    <location>
        <begin position="381"/>
        <end position="401"/>
    </location>
</feature>
<feature type="topological domain" description="Cytoplasmic" evidence="11">
    <location>
        <begin position="402"/>
        <end position="431"/>
    </location>
</feature>
<feature type="transmembrane region" description="Helical; Name=7" evidence="11">
    <location>
        <begin position="432"/>
        <end position="452"/>
    </location>
</feature>
<feature type="topological domain" description="Lumenal" evidence="11">
    <location>
        <begin position="453"/>
        <end position="471"/>
    </location>
</feature>
<feature type="transmembrane region" description="Helical; Name=8" evidence="11">
    <location>
        <begin position="472"/>
        <end position="492"/>
    </location>
</feature>
<feature type="topological domain" description="Cytoplasmic" evidence="11">
    <location>
        <begin position="493"/>
        <end position="541"/>
    </location>
</feature>
<feature type="region of interest" description="Interaction with Wnt proteins" evidence="1">
    <location>
        <begin position="101"/>
        <end position="232"/>
    </location>
</feature>
<feature type="splice variant" id="VSP_046143" description="In isoform 3." evidence="9">
    <original>APGPTTAVSYMSVKCVDARKNHHKTKWFVPWGPNHCDKIRDIEEAIPREIEANDIVFSVHIPLPHMEMSPWFQFMLFILQLDIAFKLNNQIR</original>
    <variation>G</variation>
    <location>
        <begin position="36"/>
        <end position="127"/>
    </location>
</feature>
<feature type="splice variant" id="VSP_022346" description="In isoform 2." evidence="9">
    <location>
        <begin position="36"/>
        <end position="37"/>
    </location>
</feature>
<feature type="splice variant" id="VSP_022347" description="In isoform 2." evidence="9">
    <original>DLGVHSGEELQLTTTITHVDGPTEIYKLTRKEAQE</original>
    <variation>MQLPCKSREDCALFVSELYQELFSASKYSFINDNAASGI</variation>
    <location>
        <begin position="507"/>
        <end position="541"/>
    </location>
</feature>
<feature type="sequence variant" id="VAR_086565" description="In ZKS; results in decreased secretion of WNT3A and WNT5A; decreased activation of WNT signaling; dbSNP:rs2100452147." evidence="8">
    <original>Y</original>
    <variation>C</variation>
    <location>
        <position position="392"/>
    </location>
</feature>
<feature type="sequence variant" id="VAR_029991" description="In dbSNP:rs983034." evidence="5">
    <original>V</original>
    <variation>I</variation>
    <location>
        <position position="465"/>
    </location>
</feature>
<feature type="sequence variant" id="VAR_086566" description="In ZKS; results in decreased secretion of WNT3A and WNT5A; decreased activation of WNT signaling; dbSNP:rs985347096." evidence="8">
    <original>Y</original>
    <variation>C</variation>
    <location>
        <position position="478"/>
    </location>
</feature>
<feature type="sequence variant" id="VAR_086567" description="In ZKS; results in decreased secretion of WNT3A and WNT5A; decreased activation of WNT signaling; dbSNP:rs2100377758." evidence="8">
    <original>I</original>
    <variation>T</variation>
    <location>
        <position position="531"/>
    </location>
</feature>
<feature type="sequence variant" id="VAR_086568" description="In ZKS; results in decreased secretion of WNT3A and WNT5A; decreased activation of WNT signaling; dbSNP:rs773311381." evidence="8">
    <original>R</original>
    <variation>C</variation>
    <location>
        <position position="536"/>
    </location>
</feature>
<feature type="sequence conflict" description="In Ref. 4; CAD98094." evidence="10" ref="4">
    <original>V</original>
    <variation>A</variation>
    <location>
        <position position="136"/>
    </location>
</feature>
<feature type="helix" evidence="12">
    <location>
        <begin position="5"/>
        <end position="7"/>
    </location>
</feature>
<feature type="helix" evidence="12">
    <location>
        <begin position="11"/>
        <end position="34"/>
    </location>
</feature>
<feature type="strand" evidence="12">
    <location>
        <begin position="39"/>
        <end position="46"/>
    </location>
</feature>
<feature type="strand" evidence="12">
    <location>
        <begin position="48"/>
        <end position="51"/>
    </location>
</feature>
<feature type="strand" evidence="12">
    <location>
        <begin position="57"/>
        <end position="59"/>
    </location>
</feature>
<feature type="strand" evidence="12">
    <location>
        <begin position="65"/>
        <end position="67"/>
    </location>
</feature>
<feature type="strand" evidence="12">
    <location>
        <begin position="73"/>
        <end position="76"/>
    </location>
</feature>
<feature type="helix" evidence="12">
    <location>
        <begin position="77"/>
        <end position="80"/>
    </location>
</feature>
<feature type="turn" evidence="12">
    <location>
        <begin position="81"/>
        <end position="84"/>
    </location>
</feature>
<feature type="strand" evidence="12">
    <location>
        <begin position="89"/>
        <end position="97"/>
    </location>
</feature>
<feature type="strand" evidence="12">
    <location>
        <begin position="110"/>
        <end position="119"/>
    </location>
</feature>
<feature type="strand" evidence="13">
    <location>
        <begin position="122"/>
        <end position="124"/>
    </location>
</feature>
<feature type="strand" evidence="12">
    <location>
        <begin position="131"/>
        <end position="143"/>
    </location>
</feature>
<feature type="strand" evidence="12">
    <location>
        <begin position="149"/>
        <end position="159"/>
    </location>
</feature>
<feature type="helix" evidence="14">
    <location>
        <begin position="170"/>
        <end position="172"/>
    </location>
</feature>
<feature type="strand" evidence="12">
    <location>
        <begin position="182"/>
        <end position="188"/>
    </location>
</feature>
<feature type="strand" evidence="12">
    <location>
        <begin position="193"/>
        <end position="200"/>
    </location>
</feature>
<feature type="helix" evidence="12">
    <location>
        <begin position="205"/>
        <end position="207"/>
    </location>
</feature>
<feature type="strand" evidence="12">
    <location>
        <begin position="215"/>
        <end position="226"/>
    </location>
</feature>
<feature type="helix" evidence="12">
    <location>
        <begin position="228"/>
        <end position="257"/>
    </location>
</feature>
<feature type="strand" evidence="12">
    <location>
        <begin position="258"/>
        <end position="261"/>
    </location>
</feature>
<feature type="helix" evidence="12">
    <location>
        <begin position="265"/>
        <end position="281"/>
    </location>
</feature>
<feature type="helix" evidence="12">
    <location>
        <begin position="284"/>
        <end position="287"/>
    </location>
</feature>
<feature type="turn" evidence="12">
    <location>
        <begin position="288"/>
        <end position="290"/>
    </location>
</feature>
<feature type="helix" evidence="12">
    <location>
        <begin position="296"/>
        <end position="321"/>
    </location>
</feature>
<feature type="helix" evidence="12">
    <location>
        <begin position="332"/>
        <end position="334"/>
    </location>
</feature>
<feature type="helix" evidence="12">
    <location>
        <begin position="336"/>
        <end position="362"/>
    </location>
</feature>
<feature type="helix" evidence="14">
    <location>
        <begin position="368"/>
        <end position="370"/>
    </location>
</feature>
<feature type="helix" evidence="12">
    <location>
        <begin position="372"/>
        <end position="410"/>
    </location>
</feature>
<feature type="helix" evidence="14">
    <location>
        <begin position="412"/>
        <end position="416"/>
    </location>
</feature>
<feature type="helix" evidence="12">
    <location>
        <begin position="419"/>
        <end position="454"/>
    </location>
</feature>
<feature type="strand" evidence="12">
    <location>
        <begin position="458"/>
        <end position="462"/>
    </location>
</feature>
<feature type="strand" evidence="12">
    <location>
        <begin position="465"/>
        <end position="468"/>
    </location>
</feature>
<feature type="helix" evidence="12">
    <location>
        <begin position="469"/>
        <end position="491"/>
    </location>
</feature>
<name>WLS_HUMAN</name>
<protein>
    <recommendedName>
        <fullName>Protein wntless homolog</fullName>
    </recommendedName>
    <alternativeName>
        <fullName>Integral membrane protein GPR177</fullName>
    </alternativeName>
    <alternativeName>
        <fullName>Protein evenness interrupted homolog</fullName>
        <shortName>EVI</shortName>
    </alternativeName>
    <alternativeName>
        <fullName>Putative NF-kappa-B-activating protein 373</fullName>
    </alternativeName>
</protein>